<comment type="function">
    <text evidence="1">Cell wall formation.</text>
</comment>
<comment type="catalytic activity">
    <reaction evidence="1">
        <text>UDP-N-acetyl-alpha-D-muramate + NADP(+) = UDP-N-acetyl-3-O-(1-carboxyvinyl)-alpha-D-glucosamine + NADPH + H(+)</text>
        <dbReference type="Rhea" id="RHEA:12248"/>
        <dbReference type="ChEBI" id="CHEBI:15378"/>
        <dbReference type="ChEBI" id="CHEBI:57783"/>
        <dbReference type="ChEBI" id="CHEBI:58349"/>
        <dbReference type="ChEBI" id="CHEBI:68483"/>
        <dbReference type="ChEBI" id="CHEBI:70757"/>
        <dbReference type="EC" id="1.3.1.98"/>
    </reaction>
</comment>
<comment type="cofactor">
    <cofactor evidence="1">
        <name>FAD</name>
        <dbReference type="ChEBI" id="CHEBI:57692"/>
    </cofactor>
</comment>
<comment type="pathway">
    <text evidence="1">Cell wall biogenesis; peptidoglycan biosynthesis.</text>
</comment>
<comment type="subcellular location">
    <subcellularLocation>
        <location evidence="1">Cytoplasm</location>
    </subcellularLocation>
</comment>
<comment type="similarity">
    <text evidence="1">Belongs to the MurB family.</text>
</comment>
<dbReference type="EC" id="1.3.1.98" evidence="1"/>
<dbReference type="EMBL" id="AE015924">
    <property type="protein sequence ID" value="AAQ66408.1"/>
    <property type="molecule type" value="Genomic_DNA"/>
</dbReference>
<dbReference type="RefSeq" id="WP_005874070.1">
    <property type="nucleotide sequence ID" value="NC_002950.2"/>
</dbReference>
<dbReference type="SMR" id="Q7MUY2"/>
<dbReference type="STRING" id="242619.PG_1342"/>
<dbReference type="EnsemblBacteria" id="AAQ66408">
    <property type="protein sequence ID" value="AAQ66408"/>
    <property type="gene ID" value="PG_1342"/>
</dbReference>
<dbReference type="KEGG" id="pgi:PG_1342"/>
<dbReference type="PATRIC" id="fig|242619.8.peg.1242"/>
<dbReference type="eggNOG" id="COG0812">
    <property type="taxonomic scope" value="Bacteria"/>
</dbReference>
<dbReference type="HOGENOM" id="CLU_035304_0_0_10"/>
<dbReference type="BioCyc" id="PGIN242619:G1G02-1247-MONOMER"/>
<dbReference type="UniPathway" id="UPA00219"/>
<dbReference type="Proteomes" id="UP000000588">
    <property type="component" value="Chromosome"/>
</dbReference>
<dbReference type="GO" id="GO:0005829">
    <property type="term" value="C:cytosol"/>
    <property type="evidence" value="ECO:0007669"/>
    <property type="project" value="TreeGrafter"/>
</dbReference>
<dbReference type="GO" id="GO:0071949">
    <property type="term" value="F:FAD binding"/>
    <property type="evidence" value="ECO:0007669"/>
    <property type="project" value="InterPro"/>
</dbReference>
<dbReference type="GO" id="GO:0008762">
    <property type="term" value="F:UDP-N-acetylmuramate dehydrogenase activity"/>
    <property type="evidence" value="ECO:0007669"/>
    <property type="project" value="UniProtKB-UniRule"/>
</dbReference>
<dbReference type="GO" id="GO:0051301">
    <property type="term" value="P:cell division"/>
    <property type="evidence" value="ECO:0007669"/>
    <property type="project" value="UniProtKB-KW"/>
</dbReference>
<dbReference type="GO" id="GO:0071555">
    <property type="term" value="P:cell wall organization"/>
    <property type="evidence" value="ECO:0007669"/>
    <property type="project" value="UniProtKB-KW"/>
</dbReference>
<dbReference type="GO" id="GO:0009252">
    <property type="term" value="P:peptidoglycan biosynthetic process"/>
    <property type="evidence" value="ECO:0007669"/>
    <property type="project" value="UniProtKB-UniRule"/>
</dbReference>
<dbReference type="GO" id="GO:0008360">
    <property type="term" value="P:regulation of cell shape"/>
    <property type="evidence" value="ECO:0007669"/>
    <property type="project" value="UniProtKB-KW"/>
</dbReference>
<dbReference type="Gene3D" id="3.30.465.10">
    <property type="match status" value="1"/>
</dbReference>
<dbReference type="Gene3D" id="3.90.78.10">
    <property type="entry name" value="UDP-N-acetylenolpyruvoylglucosamine reductase, C-terminal domain"/>
    <property type="match status" value="1"/>
</dbReference>
<dbReference type="Gene3D" id="3.30.43.10">
    <property type="entry name" value="Uridine Diphospho-n-acetylenolpyruvylglucosamine Reductase, domain 2"/>
    <property type="match status" value="1"/>
</dbReference>
<dbReference type="HAMAP" id="MF_00037">
    <property type="entry name" value="MurB"/>
    <property type="match status" value="1"/>
</dbReference>
<dbReference type="InterPro" id="IPR016166">
    <property type="entry name" value="FAD-bd_PCMH"/>
</dbReference>
<dbReference type="InterPro" id="IPR036318">
    <property type="entry name" value="FAD-bd_PCMH-like_sf"/>
</dbReference>
<dbReference type="InterPro" id="IPR016167">
    <property type="entry name" value="FAD-bd_PCMH_sub1"/>
</dbReference>
<dbReference type="InterPro" id="IPR016169">
    <property type="entry name" value="FAD-bd_PCMH_sub2"/>
</dbReference>
<dbReference type="InterPro" id="IPR003170">
    <property type="entry name" value="MurB"/>
</dbReference>
<dbReference type="InterPro" id="IPR011601">
    <property type="entry name" value="MurB_C"/>
</dbReference>
<dbReference type="InterPro" id="IPR036635">
    <property type="entry name" value="MurB_C_sf"/>
</dbReference>
<dbReference type="InterPro" id="IPR006094">
    <property type="entry name" value="Oxid_FAD_bind_N"/>
</dbReference>
<dbReference type="NCBIfam" id="TIGR00179">
    <property type="entry name" value="murB"/>
    <property type="match status" value="1"/>
</dbReference>
<dbReference type="NCBIfam" id="NF000755">
    <property type="entry name" value="PRK00046.1"/>
    <property type="match status" value="1"/>
</dbReference>
<dbReference type="PANTHER" id="PTHR21071">
    <property type="entry name" value="UDP-N-ACETYLENOLPYRUVOYLGLUCOSAMINE REDUCTASE"/>
    <property type="match status" value="1"/>
</dbReference>
<dbReference type="PANTHER" id="PTHR21071:SF4">
    <property type="entry name" value="UDP-N-ACETYLENOLPYRUVOYLGLUCOSAMINE REDUCTASE"/>
    <property type="match status" value="1"/>
</dbReference>
<dbReference type="Pfam" id="PF01565">
    <property type="entry name" value="FAD_binding_4"/>
    <property type="match status" value="1"/>
</dbReference>
<dbReference type="Pfam" id="PF02873">
    <property type="entry name" value="MurB_C"/>
    <property type="match status" value="1"/>
</dbReference>
<dbReference type="SUPFAM" id="SSF56176">
    <property type="entry name" value="FAD-binding/transporter-associated domain-like"/>
    <property type="match status" value="1"/>
</dbReference>
<dbReference type="SUPFAM" id="SSF56194">
    <property type="entry name" value="Uridine diphospho-N-Acetylenolpyruvylglucosamine reductase, MurB, C-terminal domain"/>
    <property type="match status" value="1"/>
</dbReference>
<dbReference type="PROSITE" id="PS51387">
    <property type="entry name" value="FAD_PCMH"/>
    <property type="match status" value="1"/>
</dbReference>
<protein>
    <recommendedName>
        <fullName evidence="1">UDP-N-acetylenolpyruvoylglucosamine reductase</fullName>
        <ecNumber evidence="1">1.3.1.98</ecNumber>
    </recommendedName>
    <alternativeName>
        <fullName evidence="1">UDP-N-acetylmuramate dehydrogenase</fullName>
    </alternativeName>
</protein>
<name>MURB_PORGI</name>
<keyword id="KW-0131">Cell cycle</keyword>
<keyword id="KW-0132">Cell division</keyword>
<keyword id="KW-0133">Cell shape</keyword>
<keyword id="KW-0961">Cell wall biogenesis/degradation</keyword>
<keyword id="KW-0963">Cytoplasm</keyword>
<keyword id="KW-0274">FAD</keyword>
<keyword id="KW-0285">Flavoprotein</keyword>
<keyword id="KW-0521">NADP</keyword>
<keyword id="KW-0560">Oxidoreductase</keyword>
<keyword id="KW-0573">Peptidoglycan synthesis</keyword>
<keyword id="KW-1185">Reference proteome</keyword>
<feature type="chain" id="PRO_0000179238" description="UDP-N-acetylenolpyruvoylglucosamine reductase">
    <location>
        <begin position="1"/>
        <end position="338"/>
    </location>
</feature>
<feature type="domain" description="FAD-binding PCMH-type" evidence="1">
    <location>
        <begin position="17"/>
        <end position="188"/>
    </location>
</feature>
<feature type="active site" evidence="1">
    <location>
        <position position="164"/>
    </location>
</feature>
<feature type="active site" description="Proton donor" evidence="1">
    <location>
        <position position="237"/>
    </location>
</feature>
<feature type="active site" evidence="1">
    <location>
        <position position="333"/>
    </location>
</feature>
<reference key="1">
    <citation type="journal article" date="2003" name="J. Bacteriol.">
        <title>Complete genome sequence of the oral pathogenic bacterium Porphyromonas gingivalis strain W83.</title>
        <authorList>
            <person name="Nelson K.E."/>
            <person name="Fleischmann R.D."/>
            <person name="DeBoy R.T."/>
            <person name="Paulsen I.T."/>
            <person name="Fouts D.E."/>
            <person name="Eisen J.A."/>
            <person name="Daugherty S.C."/>
            <person name="Dodson R.J."/>
            <person name="Durkin A.S."/>
            <person name="Gwinn M.L."/>
            <person name="Haft D.H."/>
            <person name="Kolonay J.F."/>
            <person name="Nelson W.C."/>
            <person name="Mason T.M."/>
            <person name="Tallon L."/>
            <person name="Gray J."/>
            <person name="Granger D."/>
            <person name="Tettelin H."/>
            <person name="Dong H."/>
            <person name="Galvin J.L."/>
            <person name="Duncan M.J."/>
            <person name="Dewhirst F.E."/>
            <person name="Fraser C.M."/>
        </authorList>
    </citation>
    <scope>NUCLEOTIDE SEQUENCE [LARGE SCALE GENOMIC DNA]</scope>
    <source>
        <strain>ATCC BAA-308 / W83</strain>
    </source>
</reference>
<organism>
    <name type="scientific">Porphyromonas gingivalis (strain ATCC BAA-308 / W83)</name>
    <dbReference type="NCBI Taxonomy" id="242619"/>
    <lineage>
        <taxon>Bacteria</taxon>
        <taxon>Pseudomonadati</taxon>
        <taxon>Bacteroidota</taxon>
        <taxon>Bacteroidia</taxon>
        <taxon>Bacteroidales</taxon>
        <taxon>Porphyromonadaceae</taxon>
        <taxon>Porphyromonas</taxon>
    </lineage>
</organism>
<gene>
    <name evidence="1" type="primary">murB</name>
    <name type="ordered locus">PG_1342</name>
</gene>
<sequence>MDIRQDYPLSKRNTFGIAARTDWWIDYTCDADIDRLVKDEFFQDCRVQTIGEGSNLLFLANFHGILLHSEVKGITELHKDQDSILLRVGSGMVWDDFVAYAVENNYYGIENLSLIPGQVGASAVQNIGAYGVEVSQLIEAVHARHYRTGESRVFRNEDCRYAYRYSIFKEPDYAEWTIMYVDYRLRLKPSFSLEYKALAKVLEEERITPTLQSIRDTVIRIRNSKLPDPATIGNAGSFFVNPVVSAEKFNTLQTEYPSIPSYPQPDGSVKVPAGWLIEQCGYKGHRSGAVGVYEHQALVLVNYGGATGTQVGALAEEIIGNVRQKFGITLHPEVKYIL</sequence>
<proteinExistence type="inferred from homology"/>
<evidence type="ECO:0000255" key="1">
    <source>
        <dbReference type="HAMAP-Rule" id="MF_00037"/>
    </source>
</evidence>
<accession>Q7MUY2</accession>